<feature type="chain" id="PRO_0000411877" description="Probable Xaa-Pro aminopeptidase PEPP">
    <location>
        <begin position="1"/>
        <end position="469"/>
    </location>
</feature>
<feature type="binding site" evidence="1">
    <location>
        <position position="257"/>
    </location>
    <ligand>
        <name>Mn(2+)</name>
        <dbReference type="ChEBI" id="CHEBI:29035"/>
        <label>2</label>
    </ligand>
</feature>
<feature type="binding site" evidence="1">
    <location>
        <position position="268"/>
    </location>
    <ligand>
        <name>Mn(2+)</name>
        <dbReference type="ChEBI" id="CHEBI:29035"/>
        <label>1</label>
    </ligand>
</feature>
<feature type="binding site" evidence="1">
    <location>
        <position position="268"/>
    </location>
    <ligand>
        <name>Mn(2+)</name>
        <dbReference type="ChEBI" id="CHEBI:29035"/>
        <label>2</label>
    </ligand>
</feature>
<feature type="binding site" evidence="1">
    <location>
        <position position="391"/>
    </location>
    <ligand>
        <name>Mn(2+)</name>
        <dbReference type="ChEBI" id="CHEBI:29035"/>
        <label>1</label>
    </ligand>
</feature>
<feature type="binding site" evidence="1">
    <location>
        <position position="436"/>
    </location>
    <ligand>
        <name>Mn(2+)</name>
        <dbReference type="ChEBI" id="CHEBI:29035"/>
        <label>1</label>
    </ligand>
</feature>
<feature type="binding site" evidence="1">
    <location>
        <position position="436"/>
    </location>
    <ligand>
        <name>Mn(2+)</name>
        <dbReference type="ChEBI" id="CHEBI:29035"/>
        <label>2</label>
    </ligand>
</feature>
<keyword id="KW-0031">Aminopeptidase</keyword>
<keyword id="KW-0378">Hydrolase</keyword>
<keyword id="KW-0464">Manganese</keyword>
<keyword id="KW-0479">Metal-binding</keyword>
<keyword id="KW-0482">Metalloprotease</keyword>
<keyword id="KW-0645">Protease</keyword>
<keyword id="KW-1185">Reference proteome</keyword>
<accession>C7YVN8</accession>
<dbReference type="EC" id="3.4.11.9"/>
<dbReference type="EMBL" id="GG698901">
    <property type="protein sequence ID" value="EEU43824.1"/>
    <property type="molecule type" value="Genomic_DNA"/>
</dbReference>
<dbReference type="RefSeq" id="XP_003049537.1">
    <property type="nucleotide sequence ID" value="XM_003049491.1"/>
</dbReference>
<dbReference type="SMR" id="C7YVN8"/>
<dbReference type="FunCoup" id="C7YVN8">
    <property type="interactions" value="422"/>
</dbReference>
<dbReference type="STRING" id="660122.C7YVN8"/>
<dbReference type="EnsemblFungi" id="NechaT74024">
    <property type="protein sequence ID" value="NechaP74024"/>
    <property type="gene ID" value="NechaG74024"/>
</dbReference>
<dbReference type="GeneID" id="9677112"/>
<dbReference type="KEGG" id="nhe:NECHADRAFT_74024"/>
<dbReference type="VEuPathDB" id="FungiDB:NECHADRAFT_74024"/>
<dbReference type="eggNOG" id="KOG2737">
    <property type="taxonomic scope" value="Eukaryota"/>
</dbReference>
<dbReference type="HOGENOM" id="CLU_017266_1_2_1"/>
<dbReference type="InParanoid" id="C7YVN8"/>
<dbReference type="OMA" id="DFWHKVA"/>
<dbReference type="OrthoDB" id="10261878at2759"/>
<dbReference type="Proteomes" id="UP000005206">
    <property type="component" value="Unassembled WGS sequence"/>
</dbReference>
<dbReference type="GO" id="GO:0030145">
    <property type="term" value="F:manganese ion binding"/>
    <property type="evidence" value="ECO:0007669"/>
    <property type="project" value="InterPro"/>
</dbReference>
<dbReference type="GO" id="GO:0070006">
    <property type="term" value="F:metalloaminopeptidase activity"/>
    <property type="evidence" value="ECO:0007669"/>
    <property type="project" value="InterPro"/>
</dbReference>
<dbReference type="GO" id="GO:0006508">
    <property type="term" value="P:proteolysis"/>
    <property type="evidence" value="ECO:0007669"/>
    <property type="project" value="UniProtKB-KW"/>
</dbReference>
<dbReference type="CDD" id="cd01087">
    <property type="entry name" value="Prolidase"/>
    <property type="match status" value="1"/>
</dbReference>
<dbReference type="Gene3D" id="3.90.230.10">
    <property type="entry name" value="Creatinase/methionine aminopeptidase superfamily"/>
    <property type="match status" value="1"/>
</dbReference>
<dbReference type="Gene3D" id="3.40.350.10">
    <property type="entry name" value="Creatinase/prolidase N-terminal domain"/>
    <property type="match status" value="1"/>
</dbReference>
<dbReference type="InterPro" id="IPR007865">
    <property type="entry name" value="Aminopep_P_N"/>
</dbReference>
<dbReference type="InterPro" id="IPR029149">
    <property type="entry name" value="Creatin/AminoP/Spt16_N"/>
</dbReference>
<dbReference type="InterPro" id="IPR036005">
    <property type="entry name" value="Creatinase/aminopeptidase-like"/>
</dbReference>
<dbReference type="InterPro" id="IPR000994">
    <property type="entry name" value="Pept_M24"/>
</dbReference>
<dbReference type="InterPro" id="IPR052433">
    <property type="entry name" value="X-Pro_dipept-like"/>
</dbReference>
<dbReference type="PANTHER" id="PTHR43226">
    <property type="entry name" value="XAA-PRO AMINOPEPTIDASE 3"/>
    <property type="match status" value="1"/>
</dbReference>
<dbReference type="PANTHER" id="PTHR43226:SF1">
    <property type="entry name" value="XAA-PRO DIPEPTIDASE"/>
    <property type="match status" value="1"/>
</dbReference>
<dbReference type="Pfam" id="PF05195">
    <property type="entry name" value="AMP_N"/>
    <property type="match status" value="1"/>
</dbReference>
<dbReference type="Pfam" id="PF00557">
    <property type="entry name" value="Peptidase_M24"/>
    <property type="match status" value="1"/>
</dbReference>
<dbReference type="SMART" id="SM01011">
    <property type="entry name" value="AMP_N"/>
    <property type="match status" value="1"/>
</dbReference>
<dbReference type="SUPFAM" id="SSF55920">
    <property type="entry name" value="Creatinase/aminopeptidase"/>
    <property type="match status" value="1"/>
</dbReference>
<dbReference type="SUPFAM" id="SSF53092">
    <property type="entry name" value="Creatinase/prolidase N-terminal domain"/>
    <property type="match status" value="1"/>
</dbReference>
<gene>
    <name type="primary">PEPP</name>
    <name type="ORF">NECHADRAFT_74024</name>
</gene>
<organism>
    <name type="scientific">Fusarium vanettenii (strain ATCC MYA-4622 / CBS 123669 / FGSC 9596 / NRRL 45880 / 77-13-4)</name>
    <name type="common">Fusarium solani subsp. pisi</name>
    <dbReference type="NCBI Taxonomy" id="660122"/>
    <lineage>
        <taxon>Eukaryota</taxon>
        <taxon>Fungi</taxon>
        <taxon>Dikarya</taxon>
        <taxon>Ascomycota</taxon>
        <taxon>Pezizomycotina</taxon>
        <taxon>Sordariomycetes</taxon>
        <taxon>Hypocreomycetidae</taxon>
        <taxon>Hypocreales</taxon>
        <taxon>Nectriaceae</taxon>
        <taxon>Fusarium</taxon>
        <taxon>Fusarium solani species complex</taxon>
        <taxon>Fusarium vanettenii</taxon>
    </lineage>
</organism>
<evidence type="ECO:0000250" key="1"/>
<evidence type="ECO:0000305" key="2"/>
<name>AMPP3_FUSV7</name>
<protein>
    <recommendedName>
        <fullName>Probable Xaa-Pro aminopeptidase PEPP</fullName>
        <ecNumber>3.4.11.9</ecNumber>
    </recommendedName>
    <alternativeName>
        <fullName>Aminoacylproline aminopeptidase</fullName>
    </alternativeName>
    <alternativeName>
        <fullName>Prolidase</fullName>
    </alternativeName>
</protein>
<proteinExistence type="inferred from homology"/>
<sequence length="469" mass="52429">MFAEDLDRILSGKYPGKSHALRVVELLREKVPNAKGYLYLEGRMSKLLEDSDEFEPFRQRRHFYYLTGCDLSNCYLLYDIDSSKSTLFIPPIDPEEVVWSGLPLSPQQGLEKYDVDEVKFSTELDNILSHLSGSQESTVYTIADQVCPHIKFGLDNVDSSILKGVIDRCRVVKDKYEVAMIRKANNISSLGHEAITKQASKASNEMQLEATFLGHCVAHGAKKMAYPPIVAAGRSGAILHYEANDQPLGGKQNLLVDAGAEWNNYASDITRTFPLSGTFTKESRQIYDIVYKMQMECIAIIKAGVRWEDVHMLAHEIAVEGLLQLGIFQGAKADILKAQTSLAFFPHGLGHYLGLDTHDVGGNPNFDDENKYLRYLRTRGTLPAGSVVTVEPGIYFCEHIIRPYLQDERHKDLINSDVLDKYWDVGGIRLTQGSIEDNVLVTPTGVDNLTTTIKHPDQLEGMIRGLEGV</sequence>
<reference key="1">
    <citation type="journal article" date="2009" name="PLoS Genet.">
        <title>The genome of Nectria haematococca: contribution of supernumerary chromosomes to gene expansion.</title>
        <authorList>
            <person name="Coleman J.J."/>
            <person name="Rounsley S.D."/>
            <person name="Rodriguez-Carres M."/>
            <person name="Kuo A."/>
            <person name="Wasmann C.C."/>
            <person name="Grimwood J."/>
            <person name="Schmutz J."/>
            <person name="Taga M."/>
            <person name="White G.J."/>
            <person name="Zhou S."/>
            <person name="Schwartz D.C."/>
            <person name="Freitag M."/>
            <person name="Ma L.-J."/>
            <person name="Danchin E.G.J."/>
            <person name="Henrissat B."/>
            <person name="Coutinho P.M."/>
            <person name="Nelson D.R."/>
            <person name="Straney D."/>
            <person name="Napoli C.A."/>
            <person name="Barker B.M."/>
            <person name="Gribskov M."/>
            <person name="Rep M."/>
            <person name="Kroken S."/>
            <person name="Molnar I."/>
            <person name="Rensing C."/>
            <person name="Kennell J.C."/>
            <person name="Zamora J."/>
            <person name="Farman M.L."/>
            <person name="Selker E.U."/>
            <person name="Salamov A."/>
            <person name="Shapiro H."/>
            <person name="Pangilinan J."/>
            <person name="Lindquist E."/>
            <person name="Lamers C."/>
            <person name="Grigoriev I.V."/>
            <person name="Geiser D.M."/>
            <person name="Covert S.F."/>
            <person name="Temporini E."/>
            <person name="VanEtten H.D."/>
        </authorList>
    </citation>
    <scope>NUCLEOTIDE SEQUENCE [LARGE SCALE GENOMIC DNA]</scope>
    <source>
        <strain>ATCC MYA-4622 / CBS 123669 / FGSC 9596 / NRRL 45880 / 77-13-4</strain>
    </source>
</reference>
<comment type="function">
    <text evidence="1">Catalyzes the removal of a penultimate prolyl residue from the N-termini of peptides.</text>
</comment>
<comment type="catalytic activity">
    <reaction>
        <text>Release of any N-terminal amino acid, including proline, that is linked to proline, even from a dipeptide or tripeptide.</text>
        <dbReference type="EC" id="3.4.11.9"/>
    </reaction>
</comment>
<comment type="cofactor">
    <cofactor evidence="1">
        <name>Mn(2+)</name>
        <dbReference type="ChEBI" id="CHEBI:29035"/>
    </cofactor>
    <text evidence="1">Binds 2 manganese ions per subunit.</text>
</comment>
<comment type="similarity">
    <text evidence="2">Belongs to the peptidase M24B family.</text>
</comment>